<comment type="function">
    <text evidence="1 2">Attaches the virus to host cellular receptor, inducing endocytosis of the virion by using different host proteins including TFRC, GRM2 and ITGB1 (By similarity). In the endosome, the acidic pH induces conformational changes in the glycoprotein trimer, which trigger fusion between virus and cell membrane. There is convincing in vitro evidence that the muscular form of the nicotinic acetylcholine receptor (nAChR), the neuronal cell adhesion molecule (NCAM), and the p75 neurotrophin receptor (p75NTR) bind glycoprotein and thereby facilitate rabies virus entry into cells (By similarity).</text>
</comment>
<comment type="subunit">
    <text evidence="1 2">Homotrimer (By similarity). Interacts with matrix protein (By similarity). Interacts with host TRFC. Interacts with host BST2; this interaction inhibits viral budding by tethering new virions to the cell surface. Interacts with ITGB1. Interacts with host GRM2 (By similarity).</text>
</comment>
<comment type="subcellular location">
    <subcellularLocation>
        <location evidence="4">Virion membrane</location>
        <topology evidence="4">Single-pass type I membrane protein</topology>
    </subcellularLocation>
</comment>
<comment type="PTM">
    <text evidence="1">Glycosylated and palmitoylated by host. Glycosylation is crucial for glycoprotein export at the cell surface (By similarity).</text>
</comment>
<comment type="biotechnology">
    <text>Primary surface antigen capable of inducing and reacting with virus-neutralizing antibodies. Almost all human and veterinary vaccines are based on the functional aspects of the G protein.</text>
</comment>
<comment type="miscellaneous">
    <text evidence="1">Arg-352 is highly involved in rabies virus pathogenicity. Its mutation dramatically attenuates the virus (By similarity).</text>
</comment>
<comment type="similarity">
    <text evidence="4">Belongs to the lyssavirus glycoprotein family.</text>
</comment>
<protein>
    <recommendedName>
        <fullName>Glycoprotein</fullName>
    </recommendedName>
</protein>
<dbReference type="EMBL" id="AF085333">
    <property type="protein sequence ID" value="AAC34683.1"/>
    <property type="molecule type" value="mRNA"/>
</dbReference>
<dbReference type="PIR" id="PQ0370">
    <property type="entry name" value="PQ0370"/>
</dbReference>
<dbReference type="PDB" id="8R40">
    <property type="method" value="X-ray"/>
    <property type="resolution" value="2.70 A"/>
    <property type="chains" value="C/G=201-281"/>
</dbReference>
<dbReference type="PDBsum" id="8R40"/>
<dbReference type="SMR" id="O92284"/>
<dbReference type="ChEMBL" id="CHEMBL3988502"/>
<dbReference type="GlyCosmos" id="O92284">
    <property type="glycosylation" value="3 sites, No reported glycans"/>
</dbReference>
<dbReference type="ABCD" id="O92284">
    <property type="antibodies" value="5 sequenced antibodies"/>
</dbReference>
<dbReference type="GO" id="GO:0016020">
    <property type="term" value="C:membrane"/>
    <property type="evidence" value="ECO:0007669"/>
    <property type="project" value="UniProtKB-KW"/>
</dbReference>
<dbReference type="GO" id="GO:0019031">
    <property type="term" value="C:viral envelope"/>
    <property type="evidence" value="ECO:0007669"/>
    <property type="project" value="UniProtKB-KW"/>
</dbReference>
<dbReference type="GO" id="GO:0036338">
    <property type="term" value="C:viral membrane"/>
    <property type="evidence" value="ECO:0000250"/>
    <property type="project" value="UniProtKB"/>
</dbReference>
<dbReference type="GO" id="GO:0055036">
    <property type="term" value="C:virion membrane"/>
    <property type="evidence" value="ECO:0007669"/>
    <property type="project" value="UniProtKB-SubCell"/>
</dbReference>
<dbReference type="GO" id="GO:0098670">
    <property type="term" value="P:entry receptor-mediated virion attachment to host cell"/>
    <property type="evidence" value="ECO:0000250"/>
    <property type="project" value="UniProtKB"/>
</dbReference>
<dbReference type="GO" id="GO:0039654">
    <property type="term" value="P:fusion of virus membrane with host endosome membrane"/>
    <property type="evidence" value="ECO:0000250"/>
    <property type="project" value="UniProtKB"/>
</dbReference>
<dbReference type="Gene3D" id="2.30.29.130">
    <property type="match status" value="1"/>
</dbReference>
<dbReference type="InterPro" id="IPR055448">
    <property type="entry name" value="PH_Rhabdo_glycop"/>
</dbReference>
<dbReference type="InterPro" id="IPR055447">
    <property type="entry name" value="Rhabdo_glycop_CD"/>
</dbReference>
<dbReference type="InterPro" id="IPR001903">
    <property type="entry name" value="Rhabdo_glycop_FD"/>
</dbReference>
<dbReference type="Pfam" id="PF24834">
    <property type="entry name" value="PH_Rhabdo_glycop"/>
    <property type="match status" value="1"/>
</dbReference>
<dbReference type="Pfam" id="PF24833">
    <property type="entry name" value="Rhabdo_glycop_CD"/>
    <property type="match status" value="1"/>
</dbReference>
<dbReference type="Pfam" id="PF00974">
    <property type="entry name" value="Rhabdo_glycop_FD"/>
    <property type="match status" value="1"/>
</dbReference>
<dbReference type="SUPFAM" id="SSF161008">
    <property type="entry name" value="Viral glycoprotein ectodomain-like"/>
    <property type="match status" value="1"/>
</dbReference>
<accession>O92284</accession>
<organism>
    <name type="scientific">Rabies virus (strain CVS-11)</name>
    <name type="common">RABV</name>
    <dbReference type="NCBI Taxonomy" id="11294"/>
    <lineage>
        <taxon>Viruses</taxon>
        <taxon>Riboviria</taxon>
        <taxon>Orthornavirae</taxon>
        <taxon>Negarnaviricota</taxon>
        <taxon>Haploviricotina</taxon>
        <taxon>Monjiviricetes</taxon>
        <taxon>Mononegavirales</taxon>
        <taxon>Rhabdoviridae</taxon>
        <taxon>Alpharhabdovirinae</taxon>
        <taxon>Lyssavirus</taxon>
        <taxon>Lyssavirus rabies</taxon>
    </lineage>
</organism>
<name>GLYCO_RABVC</name>
<sequence length="524" mass="58864">MVPQVLLFVPLLGFSLCFGKFPIYTIPDKLGPWSPIDIHHLSCPNNLVVEDEGCTNLSEFSYMELKVGYISAIKVNGFTCTGVVTEAETYTNFVGYVTTTFKRKHFRPTPDACRAAYNWKMAGDPRYEESLHNPYPDYHWLRTVRTTKESLIIISPSVTDLDPYDKSLHSRVFPGGKCSGITVSSTYCSTNHDYTIWMPENPRPRTPCDIFTNSRGKRASKGNKTCGFVDERGLYKSLKGACRLKLCGVLGLRLMDGTWVAMQTSDETKWCPPDQLVNLHDFRSDEIEHLVVEELVKKREECLDALESIMTTKSVSFRRLSHLRKLVPGFGKAYTIFNKTLMEADAHYKSVRTWNEIIPSKGCLKVGGRCHPHVNGVFFNGIILGPDGHVLIPEMQSSLLQQHMELLKSSVIPLMHPLADPSTVFKEGDEAEDFVEVHLPDVYKQISGVDLGLPNWGKYVLMTAGAMIGLVLIFSLMTWCRRANRPESKQRSFGGTGRNVSVTSQSGKVIPSWESYKSGGEIRL</sequence>
<gene>
    <name type="primary">G</name>
</gene>
<evidence type="ECO:0000250" key="1"/>
<evidence type="ECO:0000250" key="2">
    <source>
        <dbReference type="UniProtKB" id="P08667"/>
    </source>
</evidence>
<evidence type="ECO:0000255" key="3"/>
<evidence type="ECO:0000305" key="4"/>
<evidence type="ECO:0007829" key="5">
    <source>
        <dbReference type="PDB" id="8R40"/>
    </source>
</evidence>
<feature type="signal peptide" evidence="3">
    <location>
        <begin position="1"/>
        <end position="19"/>
    </location>
</feature>
<feature type="chain" id="PRO_0000295799" description="Glycoprotein">
    <location>
        <begin position="20"/>
        <end position="524"/>
    </location>
</feature>
<feature type="topological domain" description="Virion surface" evidence="3">
    <location>
        <begin position="20"/>
        <end position="459"/>
    </location>
</feature>
<feature type="transmembrane region" description="Helical" evidence="3">
    <location>
        <begin position="460"/>
        <end position="480"/>
    </location>
</feature>
<feature type="topological domain" description="Intravirion" evidence="3">
    <location>
        <begin position="481"/>
        <end position="524"/>
    </location>
</feature>
<feature type="lipid moiety-binding region" description="S-palmitoyl cysteine; by host" evidence="1">
    <location>
        <position position="480"/>
    </location>
</feature>
<feature type="glycosylation site" description="N-linked (GlcNAc...) asparagine; by host" evidence="4">
    <location>
        <position position="56"/>
    </location>
</feature>
<feature type="glycosylation site" description="N-linked (GlcNAc...) asparagine; by host" evidence="4">
    <location>
        <position position="223"/>
    </location>
</feature>
<feature type="glycosylation site" description="N-linked (GlcNAc...) asparagine; by host" evidence="4">
    <location>
        <position position="338"/>
    </location>
</feature>
<feature type="disulfide bond" evidence="2">
    <location>
        <begin position="43"/>
        <end position="302"/>
    </location>
</feature>
<feature type="disulfide bond" evidence="2">
    <location>
        <begin position="54"/>
        <end position="226"/>
    </location>
</feature>
<feature type="disulfide bond" evidence="2">
    <location>
        <begin position="80"/>
        <end position="113"/>
    </location>
</feature>
<feature type="disulfide bond" evidence="2">
    <location>
        <begin position="178"/>
        <end position="188"/>
    </location>
</feature>
<feature type="disulfide bond" evidence="2">
    <location>
        <begin position="208"/>
        <end position="247"/>
    </location>
</feature>
<feature type="disulfide bond" evidence="2">
    <location>
        <begin position="242"/>
        <end position="271"/>
    </location>
</feature>
<feature type="disulfide bond" evidence="2">
    <location>
        <begin position="363"/>
        <end position="370"/>
    </location>
</feature>
<feature type="strand" evidence="5">
    <location>
        <begin position="211"/>
        <end position="221"/>
    </location>
</feature>
<feature type="strand" evidence="5">
    <location>
        <begin position="224"/>
        <end position="229"/>
    </location>
</feature>
<feature type="strand" evidence="5">
    <location>
        <begin position="231"/>
        <end position="233"/>
    </location>
</feature>
<feature type="strand" evidence="5">
    <location>
        <begin position="235"/>
        <end position="237"/>
    </location>
</feature>
<feature type="strand" evidence="5">
    <location>
        <begin position="242"/>
        <end position="246"/>
    </location>
</feature>
<feature type="strand" evidence="5">
    <location>
        <begin position="249"/>
        <end position="253"/>
    </location>
</feature>
<feature type="strand" evidence="5">
    <location>
        <begin position="259"/>
        <end position="261"/>
    </location>
</feature>
<proteinExistence type="evidence at protein level"/>
<reference key="1">
    <citation type="journal article" date="1992" name="J. Gen. Virol.">
        <title>Molecular epidemiology of rabies virus in France: comparison with vaccine strains.</title>
        <authorList>
            <person name="Sacramento D."/>
            <person name="Badrane H."/>
            <person name="Bourhy H."/>
            <person name="Tordo N."/>
        </authorList>
    </citation>
    <scope>NUCLEOTIDE SEQUENCE [MRNA]</scope>
</reference>
<reference key="2">
    <citation type="journal article" date="1991" name="Virology">
        <title>Fatty acylation of rabies virus proteins.</title>
        <authorList>
            <person name="Gaudin Y."/>
            <person name="Tuffereau C."/>
            <person name="Benmansour A."/>
            <person name="Flamand A."/>
        </authorList>
    </citation>
    <scope>PALMITOYLATION</scope>
</reference>
<keyword id="KW-0002">3D-structure</keyword>
<keyword id="KW-1015">Disulfide bond</keyword>
<keyword id="KW-0325">Glycoprotein</keyword>
<keyword id="KW-0449">Lipoprotein</keyword>
<keyword id="KW-0472">Membrane</keyword>
<keyword id="KW-0564">Palmitate</keyword>
<keyword id="KW-0732">Signal</keyword>
<keyword id="KW-0812">Transmembrane</keyword>
<keyword id="KW-1133">Transmembrane helix</keyword>
<keyword id="KW-0261">Viral envelope protein</keyword>
<keyword id="KW-0946">Virion</keyword>
<organismHost>
    <name type="scientific">Homo sapiens</name>
    <name type="common">Human</name>
    <dbReference type="NCBI Taxonomy" id="9606"/>
</organismHost>
<organismHost>
    <name type="scientific">Mammalia</name>
    <dbReference type="NCBI Taxonomy" id="40674"/>
</organismHost>